<proteinExistence type="evidence at transcript level"/>
<comment type="function">
    <text evidence="2">Involved in the regulation of xylem development and growth. May regulate secondary wall formation during vascular development by modulation of brassinosteroid, gibberellin and auxin hormone signaling pathways.</text>
</comment>
<comment type="subcellular location">
    <subcellularLocation>
        <location evidence="2">Cytoplasm</location>
    </subcellularLocation>
    <subcellularLocation>
        <location evidence="2">Nucleus</location>
    </subcellularLocation>
</comment>
<comment type="alternative products">
    <event type="alternative splicing"/>
    <isoform>
        <id>Q9LSZ3-1</id>
        <name>1</name>
        <sequence type="displayed"/>
    </isoform>
    <isoform>
        <id>Q9LSZ3-2</id>
        <name>2</name>
        <sequence type="described" ref="VSP_059134 VSP_059135"/>
    </isoform>
</comment>
<comment type="tissue specificity">
    <text evidence="2">Expressed in vascular tissues of cotyledons, rosette leaves, sepals, petals, anther filaments. Expressed in roots, inflorescence stems and developing seeds.</text>
</comment>
<comment type="disruption phenotype">
    <text evidence="2">Collapsed xylem vessels in the inflorescence stems.</text>
</comment>
<comment type="miscellaneous">
    <text evidence="2">Plants overexpressing VUP1 exhibit severe dwarfism with extreme short and round shaped organs, and display extreme longevity before senescence.</text>
</comment>
<sequence length="211" mass="23691">MMDTFSCNSYEQNHPHDDDIDIDAHDHDSHGGDHQEESGWTTYLDDFSNQYRTTHHEENDHQDKSSYSLLATSTSLVSDAATHAFSGKSFPVNFPAKLKFGRGRTKKICEDDSLEDTASSPVNSPKVSHFEHIQTPPRKIEDYVSSSFVMGNIRGMGDHQIQIQEGGEQKVTLMRNLIDGNNNNNNNNMDLRSRGLCVVPISMLANFNGRC</sequence>
<organism>
    <name type="scientific">Arabidopsis thaliana</name>
    <name type="common">Mouse-ear cress</name>
    <dbReference type="NCBI Taxonomy" id="3702"/>
    <lineage>
        <taxon>Eukaryota</taxon>
        <taxon>Viridiplantae</taxon>
        <taxon>Streptophyta</taxon>
        <taxon>Embryophyta</taxon>
        <taxon>Tracheophyta</taxon>
        <taxon>Spermatophyta</taxon>
        <taxon>Magnoliopsida</taxon>
        <taxon>eudicotyledons</taxon>
        <taxon>Gunneridae</taxon>
        <taxon>Pentapetalae</taxon>
        <taxon>rosids</taxon>
        <taxon>malvids</taxon>
        <taxon>Brassicales</taxon>
        <taxon>Brassicaceae</taxon>
        <taxon>Camelineae</taxon>
        <taxon>Arabidopsis</taxon>
    </lineage>
</organism>
<reference key="1">
    <citation type="journal article" date="2000" name="DNA Res.">
        <title>Structural analysis of Arabidopsis thaliana chromosome 3. I. Sequence features of the regions of 4,504,864 bp covered by sixty P1 and TAC clones.</title>
        <authorList>
            <person name="Sato S."/>
            <person name="Nakamura Y."/>
            <person name="Kaneko T."/>
            <person name="Katoh T."/>
            <person name="Asamizu E."/>
            <person name="Tabata S."/>
        </authorList>
    </citation>
    <scope>NUCLEOTIDE SEQUENCE [LARGE SCALE GENOMIC DNA]</scope>
    <source>
        <strain>cv. Columbia</strain>
    </source>
</reference>
<reference key="2">
    <citation type="journal article" date="2017" name="Plant J.">
        <title>Araport11: a complete reannotation of the Arabidopsis thaliana reference genome.</title>
        <authorList>
            <person name="Cheng C.Y."/>
            <person name="Krishnakumar V."/>
            <person name="Chan A.P."/>
            <person name="Thibaud-Nissen F."/>
            <person name="Schobel S."/>
            <person name="Town C.D."/>
        </authorList>
    </citation>
    <scope>GENOME REANNOTATION</scope>
    <source>
        <strain>cv. Columbia</strain>
    </source>
</reference>
<reference key="3">
    <citation type="journal article" date="2003" name="Science">
        <title>Empirical analysis of transcriptional activity in the Arabidopsis genome.</title>
        <authorList>
            <person name="Yamada K."/>
            <person name="Lim J."/>
            <person name="Dale J.M."/>
            <person name="Chen H."/>
            <person name="Shinn P."/>
            <person name="Palm C.J."/>
            <person name="Southwick A.M."/>
            <person name="Wu H.C."/>
            <person name="Kim C.J."/>
            <person name="Nguyen M."/>
            <person name="Pham P.K."/>
            <person name="Cheuk R.F."/>
            <person name="Karlin-Newmann G."/>
            <person name="Liu S.X."/>
            <person name="Lam B."/>
            <person name="Sakano H."/>
            <person name="Wu T."/>
            <person name="Yu G."/>
            <person name="Miranda M."/>
            <person name="Quach H.L."/>
            <person name="Tripp M."/>
            <person name="Chang C.H."/>
            <person name="Lee J.M."/>
            <person name="Toriumi M.J."/>
            <person name="Chan M.M."/>
            <person name="Tang C.C."/>
            <person name="Onodera C.S."/>
            <person name="Deng J.M."/>
            <person name="Akiyama K."/>
            <person name="Ansari Y."/>
            <person name="Arakawa T."/>
            <person name="Banh J."/>
            <person name="Banno F."/>
            <person name="Bowser L."/>
            <person name="Brooks S.Y."/>
            <person name="Carninci P."/>
            <person name="Chao Q."/>
            <person name="Choy N."/>
            <person name="Enju A."/>
            <person name="Goldsmith A.D."/>
            <person name="Gurjal M."/>
            <person name="Hansen N.F."/>
            <person name="Hayashizaki Y."/>
            <person name="Johnson-Hopson C."/>
            <person name="Hsuan V.W."/>
            <person name="Iida K."/>
            <person name="Karnes M."/>
            <person name="Khan S."/>
            <person name="Koesema E."/>
            <person name="Ishida J."/>
            <person name="Jiang P.X."/>
            <person name="Jones T."/>
            <person name="Kawai J."/>
            <person name="Kamiya A."/>
            <person name="Meyers C."/>
            <person name="Nakajima M."/>
            <person name="Narusaka M."/>
            <person name="Seki M."/>
            <person name="Sakurai T."/>
            <person name="Satou M."/>
            <person name="Tamse R."/>
            <person name="Vaysberg M."/>
            <person name="Wallender E.K."/>
            <person name="Wong C."/>
            <person name="Yamamura Y."/>
            <person name="Yuan S."/>
            <person name="Shinozaki K."/>
            <person name="Davis R.W."/>
            <person name="Theologis A."/>
            <person name="Ecker J.R."/>
        </authorList>
    </citation>
    <scope>NUCLEOTIDE SEQUENCE [LARGE SCALE MRNA] (ISOFORM 2)</scope>
    <source>
        <strain>cv. Columbia</strain>
    </source>
</reference>
<reference key="4">
    <citation type="journal article" date="2014" name="Plant Physiol.">
        <title>Arabidopsis VASCULAR-RELATED UNKNOWN PROTEIN1 regulates xylem development and growth by a conserved mechanism that modulates hormone signaling.</title>
        <authorList>
            <person name="Grienenberger E."/>
            <person name="Douglas C.J."/>
        </authorList>
    </citation>
    <scope>FUNCTION</scope>
    <scope>SUBCELLULAR LOCATION</scope>
    <scope>TISSUE SPECIFICITY</scope>
    <scope>DISRUPTION PHENOTYPE</scope>
</reference>
<accession>Q9LSZ3</accession>
<accession>Q8GRY6</accession>
<name>VUP1_ARATH</name>
<gene>
    <name evidence="3" type="primary">VUP1</name>
    <name evidence="4" type="ordered locus">At3g21710</name>
</gene>
<evidence type="ECO:0000256" key="1">
    <source>
        <dbReference type="SAM" id="MobiDB-lite"/>
    </source>
</evidence>
<evidence type="ECO:0000269" key="2">
    <source>
    </source>
</evidence>
<evidence type="ECO:0000303" key="3">
    <source>
    </source>
</evidence>
<evidence type="ECO:0000312" key="4">
    <source>
        <dbReference type="Araport" id="AT3G21710"/>
    </source>
</evidence>
<feature type="chain" id="PRO_0000441921" description="Vascular-related unknown protein 1">
    <location>
        <begin position="1"/>
        <end position="211"/>
    </location>
</feature>
<feature type="region of interest" description="Disordered" evidence="1">
    <location>
        <begin position="1"/>
        <end position="40"/>
    </location>
</feature>
<feature type="compositionally biased region" description="Polar residues" evidence="1">
    <location>
        <begin position="1"/>
        <end position="12"/>
    </location>
</feature>
<feature type="compositionally biased region" description="Basic and acidic residues" evidence="1">
    <location>
        <begin position="13"/>
        <end position="37"/>
    </location>
</feature>
<feature type="splice variant" id="VSP_059134" description="In isoform 2.">
    <original>GNIRGMGDHQIQIQEGGEQKVTLMR</original>
    <variation>VISLTLFSIQIISLSILFAIEFINN</variation>
    <location>
        <begin position="151"/>
        <end position="175"/>
    </location>
</feature>
<feature type="splice variant" id="VSP_059135" description="In isoform 2.">
    <location>
        <begin position="176"/>
        <end position="211"/>
    </location>
</feature>
<dbReference type="EMBL" id="AB025634">
    <property type="protein sequence ID" value="BAB02833.1"/>
    <property type="molecule type" value="Genomic_DNA"/>
</dbReference>
<dbReference type="EMBL" id="CP002686">
    <property type="protein sequence ID" value="AEE76542.1"/>
    <property type="molecule type" value="Genomic_DNA"/>
</dbReference>
<dbReference type="EMBL" id="CP002686">
    <property type="protein sequence ID" value="AEE76543.1"/>
    <property type="molecule type" value="Genomic_DNA"/>
</dbReference>
<dbReference type="EMBL" id="BT000445">
    <property type="protein sequence ID" value="AAN17422.1"/>
    <property type="molecule type" value="mRNA"/>
</dbReference>
<dbReference type="EMBL" id="BT001217">
    <property type="protein sequence ID" value="AAN65104.1"/>
    <property type="molecule type" value="mRNA"/>
</dbReference>
<dbReference type="RefSeq" id="NP_188808.2">
    <molecule id="Q9LSZ3-2"/>
    <property type="nucleotide sequence ID" value="NM_113066.3"/>
</dbReference>
<dbReference type="RefSeq" id="NP_974350.1">
    <molecule id="Q9LSZ3-1"/>
    <property type="nucleotide sequence ID" value="NM_202621.3"/>
</dbReference>
<dbReference type="FunCoup" id="Q9LSZ3">
    <property type="interactions" value="20"/>
</dbReference>
<dbReference type="STRING" id="3702.Q9LSZ3"/>
<dbReference type="iPTMnet" id="Q9LSZ3"/>
<dbReference type="PaxDb" id="3702-AT3G21710.2"/>
<dbReference type="ProteomicsDB" id="242711">
    <molecule id="Q9LSZ3-1"/>
</dbReference>
<dbReference type="EnsemblPlants" id="AT3G21710.1">
    <molecule id="Q9LSZ3-2"/>
    <property type="protein sequence ID" value="AT3G21710.1"/>
    <property type="gene ID" value="AT3G21710"/>
</dbReference>
<dbReference type="EnsemblPlants" id="AT3G21710.2">
    <molecule id="Q9LSZ3-1"/>
    <property type="protein sequence ID" value="AT3G21710.2"/>
    <property type="gene ID" value="AT3G21710"/>
</dbReference>
<dbReference type="GeneID" id="821725"/>
<dbReference type="Gramene" id="AT3G21710.1">
    <molecule id="Q9LSZ3-2"/>
    <property type="protein sequence ID" value="AT3G21710.1"/>
    <property type="gene ID" value="AT3G21710"/>
</dbReference>
<dbReference type="Gramene" id="AT3G21710.2">
    <molecule id="Q9LSZ3-1"/>
    <property type="protein sequence ID" value="AT3G21710.2"/>
    <property type="gene ID" value="AT3G21710"/>
</dbReference>
<dbReference type="KEGG" id="ath:AT3G21710"/>
<dbReference type="Araport" id="AT3G21710"/>
<dbReference type="TAIR" id="AT3G21710">
    <property type="gene designation" value="VUP1"/>
</dbReference>
<dbReference type="eggNOG" id="ENOG502S5I4">
    <property type="taxonomic scope" value="Eukaryota"/>
</dbReference>
<dbReference type="HOGENOM" id="CLU_092975_0_0_1"/>
<dbReference type="InParanoid" id="Q9LSZ3"/>
<dbReference type="OMA" id="EYNNINR"/>
<dbReference type="PhylomeDB" id="Q9LSZ3"/>
<dbReference type="PRO" id="PR:Q9LSZ3"/>
<dbReference type="Proteomes" id="UP000006548">
    <property type="component" value="Chromosome 3"/>
</dbReference>
<dbReference type="ExpressionAtlas" id="Q9LSZ3">
    <property type="expression patterns" value="baseline and differential"/>
</dbReference>
<dbReference type="GO" id="GO:0005829">
    <property type="term" value="C:cytosol"/>
    <property type="evidence" value="ECO:0000314"/>
    <property type="project" value="TAIR"/>
</dbReference>
<dbReference type="GO" id="GO:0005634">
    <property type="term" value="C:nucleus"/>
    <property type="evidence" value="ECO:0000314"/>
    <property type="project" value="TAIR"/>
</dbReference>
<dbReference type="GO" id="GO:0010089">
    <property type="term" value="P:xylem development"/>
    <property type="evidence" value="ECO:0000315"/>
    <property type="project" value="TAIR"/>
</dbReference>
<dbReference type="InterPro" id="IPR039280">
    <property type="entry name" value="VUP"/>
</dbReference>
<dbReference type="PANTHER" id="PTHR33974:SF2">
    <property type="entry name" value="VASCULAR-RELATED UNKNOWN PROTEIN 1"/>
    <property type="match status" value="1"/>
</dbReference>
<dbReference type="PANTHER" id="PTHR33974">
    <property type="entry name" value="VASCULAR-RELATED UNKNOWN PROTEIN 1-RELATED"/>
    <property type="match status" value="1"/>
</dbReference>
<keyword id="KW-0025">Alternative splicing</keyword>
<keyword id="KW-0963">Cytoplasm</keyword>
<keyword id="KW-0539">Nucleus</keyword>
<keyword id="KW-1185">Reference proteome</keyword>
<protein>
    <recommendedName>
        <fullName evidence="3">Vascular-related unknown protein 1</fullName>
    </recommendedName>
</protein>